<protein>
    <recommendedName>
        <fullName evidence="1">Shikimate kinase</fullName>
        <shortName evidence="1">SK</shortName>
        <ecNumber evidence="1">2.7.1.71</ecNumber>
    </recommendedName>
</protein>
<name>AROK_CHRVO</name>
<proteinExistence type="inferred from homology"/>
<comment type="function">
    <text evidence="1">Catalyzes the specific phosphorylation of the 3-hydroxyl group of shikimic acid using ATP as a cosubstrate.</text>
</comment>
<comment type="catalytic activity">
    <reaction evidence="1">
        <text>shikimate + ATP = 3-phosphoshikimate + ADP + H(+)</text>
        <dbReference type="Rhea" id="RHEA:13121"/>
        <dbReference type="ChEBI" id="CHEBI:15378"/>
        <dbReference type="ChEBI" id="CHEBI:30616"/>
        <dbReference type="ChEBI" id="CHEBI:36208"/>
        <dbReference type="ChEBI" id="CHEBI:145989"/>
        <dbReference type="ChEBI" id="CHEBI:456216"/>
        <dbReference type="EC" id="2.7.1.71"/>
    </reaction>
</comment>
<comment type="cofactor">
    <cofactor evidence="1">
        <name>Mg(2+)</name>
        <dbReference type="ChEBI" id="CHEBI:18420"/>
    </cofactor>
    <text evidence="1">Binds 1 Mg(2+) ion per subunit.</text>
</comment>
<comment type="pathway">
    <text evidence="1">Metabolic intermediate biosynthesis; chorismate biosynthesis; chorismate from D-erythrose 4-phosphate and phosphoenolpyruvate: step 5/7.</text>
</comment>
<comment type="subunit">
    <text evidence="1">Monomer.</text>
</comment>
<comment type="subcellular location">
    <subcellularLocation>
        <location evidence="1">Cytoplasm</location>
    </subcellularLocation>
</comment>
<comment type="similarity">
    <text evidence="1">Belongs to the shikimate kinase family.</text>
</comment>
<gene>
    <name evidence="1" type="primary">aroK</name>
    <name type="ordered locus">CV_0828</name>
</gene>
<organism>
    <name type="scientific">Chromobacterium violaceum (strain ATCC 12472 / DSM 30191 / JCM 1249 / CCUG 213 / NBRC 12614 / NCIMB 9131 / NCTC 9757 / MK)</name>
    <dbReference type="NCBI Taxonomy" id="243365"/>
    <lineage>
        <taxon>Bacteria</taxon>
        <taxon>Pseudomonadati</taxon>
        <taxon>Pseudomonadota</taxon>
        <taxon>Betaproteobacteria</taxon>
        <taxon>Neisseriales</taxon>
        <taxon>Chromobacteriaceae</taxon>
        <taxon>Chromobacterium</taxon>
    </lineage>
</organism>
<feature type="chain" id="PRO_0000237865" description="Shikimate kinase">
    <location>
        <begin position="1"/>
        <end position="184"/>
    </location>
</feature>
<feature type="binding site" evidence="1">
    <location>
        <begin position="18"/>
        <end position="23"/>
    </location>
    <ligand>
        <name>ATP</name>
        <dbReference type="ChEBI" id="CHEBI:30616"/>
    </ligand>
</feature>
<feature type="binding site" evidence="1">
    <location>
        <position position="22"/>
    </location>
    <ligand>
        <name>Mg(2+)</name>
        <dbReference type="ChEBI" id="CHEBI:18420"/>
    </ligand>
</feature>
<feature type="binding site" evidence="1">
    <location>
        <position position="40"/>
    </location>
    <ligand>
        <name>substrate</name>
    </ligand>
</feature>
<feature type="binding site" evidence="1">
    <location>
        <position position="64"/>
    </location>
    <ligand>
        <name>substrate</name>
    </ligand>
</feature>
<feature type="binding site" evidence="1">
    <location>
        <position position="86"/>
    </location>
    <ligand>
        <name>substrate</name>
    </ligand>
</feature>
<feature type="binding site" evidence="1">
    <location>
        <position position="124"/>
    </location>
    <ligand>
        <name>ATP</name>
        <dbReference type="ChEBI" id="CHEBI:30616"/>
    </ligand>
</feature>
<feature type="binding site" evidence="1">
    <location>
        <position position="143"/>
    </location>
    <ligand>
        <name>substrate</name>
    </ligand>
</feature>
<feature type="binding site" evidence="1">
    <location>
        <position position="160"/>
    </location>
    <ligand>
        <name>ATP</name>
        <dbReference type="ChEBI" id="CHEBI:30616"/>
    </ligand>
</feature>
<dbReference type="EC" id="2.7.1.71" evidence="1"/>
<dbReference type="EMBL" id="AE016825">
    <property type="protein sequence ID" value="AAQ58503.1"/>
    <property type="molecule type" value="Genomic_DNA"/>
</dbReference>
<dbReference type="RefSeq" id="WP_011134383.1">
    <property type="nucleotide sequence ID" value="NC_005085.1"/>
</dbReference>
<dbReference type="SMR" id="Q7NZU3"/>
<dbReference type="STRING" id="243365.CV_0828"/>
<dbReference type="GeneID" id="66365272"/>
<dbReference type="KEGG" id="cvi:CV_0828"/>
<dbReference type="eggNOG" id="COG0703">
    <property type="taxonomic scope" value="Bacteria"/>
</dbReference>
<dbReference type="HOGENOM" id="CLU_057607_1_1_4"/>
<dbReference type="OrthoDB" id="9800332at2"/>
<dbReference type="UniPathway" id="UPA00053">
    <property type="reaction ID" value="UER00088"/>
</dbReference>
<dbReference type="Proteomes" id="UP000001424">
    <property type="component" value="Chromosome"/>
</dbReference>
<dbReference type="GO" id="GO:0005829">
    <property type="term" value="C:cytosol"/>
    <property type="evidence" value="ECO:0007669"/>
    <property type="project" value="TreeGrafter"/>
</dbReference>
<dbReference type="GO" id="GO:0005524">
    <property type="term" value="F:ATP binding"/>
    <property type="evidence" value="ECO:0007669"/>
    <property type="project" value="UniProtKB-UniRule"/>
</dbReference>
<dbReference type="GO" id="GO:0000287">
    <property type="term" value="F:magnesium ion binding"/>
    <property type="evidence" value="ECO:0007669"/>
    <property type="project" value="UniProtKB-UniRule"/>
</dbReference>
<dbReference type="GO" id="GO:0004765">
    <property type="term" value="F:shikimate kinase activity"/>
    <property type="evidence" value="ECO:0007669"/>
    <property type="project" value="UniProtKB-UniRule"/>
</dbReference>
<dbReference type="GO" id="GO:0008652">
    <property type="term" value="P:amino acid biosynthetic process"/>
    <property type="evidence" value="ECO:0007669"/>
    <property type="project" value="UniProtKB-KW"/>
</dbReference>
<dbReference type="GO" id="GO:0009073">
    <property type="term" value="P:aromatic amino acid family biosynthetic process"/>
    <property type="evidence" value="ECO:0007669"/>
    <property type="project" value="UniProtKB-KW"/>
</dbReference>
<dbReference type="GO" id="GO:0009423">
    <property type="term" value="P:chorismate biosynthetic process"/>
    <property type="evidence" value="ECO:0007669"/>
    <property type="project" value="UniProtKB-UniRule"/>
</dbReference>
<dbReference type="CDD" id="cd00464">
    <property type="entry name" value="SK"/>
    <property type="match status" value="1"/>
</dbReference>
<dbReference type="Gene3D" id="3.40.50.300">
    <property type="entry name" value="P-loop containing nucleotide triphosphate hydrolases"/>
    <property type="match status" value="1"/>
</dbReference>
<dbReference type="HAMAP" id="MF_00109">
    <property type="entry name" value="Shikimate_kinase"/>
    <property type="match status" value="1"/>
</dbReference>
<dbReference type="InterPro" id="IPR027417">
    <property type="entry name" value="P-loop_NTPase"/>
</dbReference>
<dbReference type="InterPro" id="IPR031322">
    <property type="entry name" value="Shikimate/glucono_kinase"/>
</dbReference>
<dbReference type="InterPro" id="IPR000623">
    <property type="entry name" value="Shikimate_kinase/TSH1"/>
</dbReference>
<dbReference type="InterPro" id="IPR023000">
    <property type="entry name" value="Shikimate_kinase_CS"/>
</dbReference>
<dbReference type="NCBIfam" id="NF003456">
    <property type="entry name" value="PRK05057.1"/>
    <property type="match status" value="1"/>
</dbReference>
<dbReference type="PANTHER" id="PTHR21087">
    <property type="entry name" value="SHIKIMATE KINASE"/>
    <property type="match status" value="1"/>
</dbReference>
<dbReference type="PANTHER" id="PTHR21087:SF16">
    <property type="entry name" value="SHIKIMATE KINASE 1, CHLOROPLASTIC"/>
    <property type="match status" value="1"/>
</dbReference>
<dbReference type="Pfam" id="PF01202">
    <property type="entry name" value="SKI"/>
    <property type="match status" value="1"/>
</dbReference>
<dbReference type="PRINTS" id="PR01100">
    <property type="entry name" value="SHIKIMTKNASE"/>
</dbReference>
<dbReference type="SUPFAM" id="SSF52540">
    <property type="entry name" value="P-loop containing nucleoside triphosphate hydrolases"/>
    <property type="match status" value="1"/>
</dbReference>
<dbReference type="PROSITE" id="PS01128">
    <property type="entry name" value="SHIKIMATE_KINASE"/>
    <property type="match status" value="1"/>
</dbReference>
<accession>Q7NZU3</accession>
<sequence length="184" mass="20671">MPAMEKLAGNFFLVGLMGAGKTTVGRALARRTGKTFYDSDQEIEARTGVRVATIFDIEGEMRFRNREACVIRDLAQQRDIVLATGGGAVLREENRKVLASHGTVIYLRASIDDLLARTQHDKNRPLLQIADPRAKLESLFNERDPFYREIADIIIDTTQQNVNLLVGRLVDQLLDSPHHPKETD</sequence>
<reference key="1">
    <citation type="journal article" date="2003" name="Proc. Natl. Acad. Sci. U.S.A.">
        <title>The complete genome sequence of Chromobacterium violaceum reveals remarkable and exploitable bacterial adaptability.</title>
        <authorList>
            <person name="Vasconcelos A.T.R."/>
            <person name="de Almeida D.F."/>
            <person name="Hungria M."/>
            <person name="Guimaraes C.T."/>
            <person name="Antonio R.V."/>
            <person name="Almeida F.C."/>
            <person name="de Almeida L.G.P."/>
            <person name="de Almeida R."/>
            <person name="Alves-Gomes J.A."/>
            <person name="Andrade E.M."/>
            <person name="Araripe J."/>
            <person name="de Araujo M.F.F."/>
            <person name="Astolfi-Filho S."/>
            <person name="Azevedo V."/>
            <person name="Baptista A.J."/>
            <person name="Bataus L.A.M."/>
            <person name="Batista J.S."/>
            <person name="Belo A."/>
            <person name="van den Berg C."/>
            <person name="Bogo M."/>
            <person name="Bonatto S."/>
            <person name="Bordignon J."/>
            <person name="Brigido M.M."/>
            <person name="Brito C.A."/>
            <person name="Brocchi M."/>
            <person name="Burity H.A."/>
            <person name="Camargo A.A."/>
            <person name="Cardoso D.D.P."/>
            <person name="Carneiro N.P."/>
            <person name="Carraro D.M."/>
            <person name="Carvalho C.M.B."/>
            <person name="Cascardo J.C.M."/>
            <person name="Cavada B.S."/>
            <person name="Chueire L.M.O."/>
            <person name="Creczynski-Pasa T.B."/>
            <person name="Cunha-Junior N.C."/>
            <person name="Fagundes N."/>
            <person name="Falcao C.L."/>
            <person name="Fantinatti F."/>
            <person name="Farias I.P."/>
            <person name="Felipe M.S.S."/>
            <person name="Ferrari L.P."/>
            <person name="Ferro J.A."/>
            <person name="Ferro M.I.T."/>
            <person name="Franco G.R."/>
            <person name="Freitas N.S.A."/>
            <person name="Furlan L.R."/>
            <person name="Gazzinelli R.T."/>
            <person name="Gomes E.A."/>
            <person name="Goncalves P.R."/>
            <person name="Grangeiro T.B."/>
            <person name="Grattapaglia D."/>
            <person name="Grisard E.C."/>
            <person name="Hanna E.S."/>
            <person name="Jardim S.N."/>
            <person name="Laurino J."/>
            <person name="Leoi L.C.T."/>
            <person name="Lima L.F.A."/>
            <person name="Loureiro M.F."/>
            <person name="Lyra M.C.C.P."/>
            <person name="Madeira H.M.F."/>
            <person name="Manfio G.P."/>
            <person name="Maranhao A.Q."/>
            <person name="Martins W.S."/>
            <person name="di Mauro S.M.Z."/>
            <person name="de Medeiros S.R.B."/>
            <person name="Meissner R.V."/>
            <person name="Moreira M.A.M."/>
            <person name="Nascimento F.F."/>
            <person name="Nicolas M.F."/>
            <person name="Oliveira J.G."/>
            <person name="Oliveira S.C."/>
            <person name="Paixao R.F.C."/>
            <person name="Parente J.A."/>
            <person name="Pedrosa F.O."/>
            <person name="Pena S.D.J."/>
            <person name="Pereira J.O."/>
            <person name="Pereira M."/>
            <person name="Pinto L.S.R.C."/>
            <person name="Pinto L.S."/>
            <person name="Porto J.I.R."/>
            <person name="Potrich D.P."/>
            <person name="Ramalho-Neto C.E."/>
            <person name="Reis A.M.M."/>
            <person name="Rigo L.U."/>
            <person name="Rondinelli E."/>
            <person name="Santos E.B.P."/>
            <person name="Santos F.R."/>
            <person name="Schneider M.P.C."/>
            <person name="Seuanez H.N."/>
            <person name="Silva A.M.R."/>
            <person name="da Silva A.L.C."/>
            <person name="Silva D.W."/>
            <person name="Silva R."/>
            <person name="Simoes I.C."/>
            <person name="Simon D."/>
            <person name="Soares C.M.A."/>
            <person name="Soares R.B.A."/>
            <person name="Souza E.M."/>
            <person name="Souza K.R.L."/>
            <person name="Souza R.C."/>
            <person name="Steffens M.B.R."/>
            <person name="Steindel M."/>
            <person name="Teixeira S.R."/>
            <person name="Urmenyi T."/>
            <person name="Vettore A."/>
            <person name="Wassem R."/>
            <person name="Zaha A."/>
            <person name="Simpson A.J.G."/>
        </authorList>
    </citation>
    <scope>NUCLEOTIDE SEQUENCE [LARGE SCALE GENOMIC DNA]</scope>
    <source>
        <strain>ATCC 12472 / DSM 30191 / JCM 1249 / CCUG 213 / NBRC 12614 / NCIMB 9131 / NCTC 9757 / MK</strain>
    </source>
</reference>
<keyword id="KW-0028">Amino-acid biosynthesis</keyword>
<keyword id="KW-0057">Aromatic amino acid biosynthesis</keyword>
<keyword id="KW-0067">ATP-binding</keyword>
<keyword id="KW-0963">Cytoplasm</keyword>
<keyword id="KW-0418">Kinase</keyword>
<keyword id="KW-0460">Magnesium</keyword>
<keyword id="KW-0479">Metal-binding</keyword>
<keyword id="KW-0547">Nucleotide-binding</keyword>
<keyword id="KW-1185">Reference proteome</keyword>
<keyword id="KW-0808">Transferase</keyword>
<evidence type="ECO:0000255" key="1">
    <source>
        <dbReference type="HAMAP-Rule" id="MF_00109"/>
    </source>
</evidence>